<comment type="function">
    <text evidence="5">May play a role in chromatin regulation of male germ cells.</text>
</comment>
<comment type="subunit">
    <text evidence="2">Interacts (via C-terminus) with CSNK2A2.</text>
</comment>
<comment type="subcellular location">
    <subcellularLocation>
        <location evidence="2">Nucleus</location>
    </subcellularLocation>
    <text evidence="2">Present in nuclei of spermatids during chromatin condensation.</text>
</comment>
<comment type="tissue specificity">
    <text evidence="2">Expressed exclusively in testis (at protein level). Within testis, expressed mainly in the intermediate compartment of the seminiferous tubules with weaker expression in the basal and adluminal compartments.</text>
</comment>
<comment type="PTM">
    <text evidence="2">Phosphorylated by CK2 (casein kinase II), specifically by complexes containing catalytic subunit CSNK2A2.</text>
</comment>
<comment type="sequence caution" evidence="4">
    <conflict type="erroneous initiation">
        <sequence resource="EMBL-CDS" id="AAI37819"/>
    </conflict>
    <text>Truncated N-terminus.</text>
</comment>
<comment type="sequence caution" evidence="4">
    <conflict type="erroneous initiation">
        <sequence resource="EMBL-CDS" id="AAO15676"/>
    </conflict>
    <text>Truncated N-terminus.</text>
</comment>
<comment type="sequence caution" evidence="4">
    <conflict type="erroneous gene model prediction">
        <sequence resource="EMBL-CDS" id="EDK98240"/>
    </conflict>
</comment>
<protein>
    <recommendedName>
        <fullName evidence="8">Casein kinase II subunit alpha'-interacting protein</fullName>
    </recommendedName>
    <alternativeName>
        <fullName evidence="3">CK2 target protein 2</fullName>
    </alternativeName>
    <alternativeName>
        <fullName evidence="8">Casein kinase 2 alpha prime interacting protein</fullName>
    </alternativeName>
</protein>
<gene>
    <name evidence="8" type="primary">Csnk2a2ip</name>
    <name evidence="3" type="synonym">Ckt2</name>
    <name evidence="8" type="synonym">Csnka2ip</name>
</gene>
<accession>Q8CH19</accession>
<accession>A0A1B0GSC5</accession>
<dbReference type="EMBL" id="AC154294">
    <property type="status" value="NOT_ANNOTATED_CDS"/>
    <property type="molecule type" value="Genomic_DNA"/>
</dbReference>
<dbReference type="EMBL" id="AC166327">
    <property type="status" value="NOT_ANNOTATED_CDS"/>
    <property type="molecule type" value="Genomic_DNA"/>
</dbReference>
<dbReference type="EMBL" id="CH466521">
    <property type="protein sequence ID" value="EDK98240.1"/>
    <property type="status" value="ALT_SEQ"/>
    <property type="molecule type" value="Genomic_DNA"/>
</dbReference>
<dbReference type="EMBL" id="AF463503">
    <property type="protein sequence ID" value="AAO15676.1"/>
    <property type="status" value="ALT_INIT"/>
    <property type="molecule type" value="mRNA"/>
</dbReference>
<dbReference type="EMBL" id="BC137818">
    <property type="protein sequence ID" value="AAI37819.1"/>
    <property type="status" value="ALT_INIT"/>
    <property type="molecule type" value="mRNA"/>
</dbReference>
<dbReference type="CCDS" id="CCDS37374.2"/>
<dbReference type="RefSeq" id="NP_001355650.1">
    <property type="nucleotide sequence ID" value="NM_001368721.1"/>
</dbReference>
<dbReference type="RefSeq" id="NP_776286.2">
    <property type="nucleotide sequence ID" value="NM_173861.3"/>
</dbReference>
<dbReference type="RefSeq" id="XP_006522159.1">
    <property type="nucleotide sequence ID" value="XM_006522096.1"/>
</dbReference>
<dbReference type="RefSeq" id="XP_006522160.1">
    <property type="nucleotide sequence ID" value="XM_006522097.1"/>
</dbReference>
<dbReference type="RefSeq" id="XP_011244189.1">
    <property type="nucleotide sequence ID" value="XM_011245887.1"/>
</dbReference>
<dbReference type="FunCoup" id="Q8CH19">
    <property type="interactions" value="132"/>
</dbReference>
<dbReference type="STRING" id="10090.ENSMUSP00000086692"/>
<dbReference type="ChEMBL" id="CHEMBL3832945"/>
<dbReference type="GlyGen" id="Q8CH19">
    <property type="glycosylation" value="2 sites"/>
</dbReference>
<dbReference type="iPTMnet" id="Q8CH19"/>
<dbReference type="PhosphoSitePlus" id="Q8CH19"/>
<dbReference type="PaxDb" id="10090-ENSMUSP00000086692"/>
<dbReference type="ProteomicsDB" id="285372"/>
<dbReference type="Ensembl" id="ENSMUST00000209382.3">
    <property type="protein sequence ID" value="ENSMUSP00000147880.2"/>
    <property type="gene ID" value="ENSMUSG00000068167.7"/>
</dbReference>
<dbReference type="GeneID" id="224291"/>
<dbReference type="KEGG" id="mmu:224291"/>
<dbReference type="UCSC" id="uc012aha.1">
    <property type="organism name" value="mouse"/>
</dbReference>
<dbReference type="AGR" id="MGI:2676295"/>
<dbReference type="CTD" id="111064647"/>
<dbReference type="MGI" id="MGI:2676295">
    <property type="gene designation" value="Csnk2a2ip"/>
</dbReference>
<dbReference type="VEuPathDB" id="HostDB:ENSMUSG00000068167"/>
<dbReference type="eggNOG" id="ENOG502RQH2">
    <property type="taxonomic scope" value="Eukaryota"/>
</dbReference>
<dbReference type="GeneTree" id="ENSGT00390000012239"/>
<dbReference type="HOGENOM" id="CLU_1158683_0_0_1"/>
<dbReference type="InParanoid" id="Q8CH19"/>
<dbReference type="OMA" id="CHSKFQN"/>
<dbReference type="OrthoDB" id="9526609at2759"/>
<dbReference type="PhylomeDB" id="Q8CH19"/>
<dbReference type="TreeFam" id="TF339570"/>
<dbReference type="BioGRID-ORCS" id="224291">
    <property type="hits" value="1 hit in 77 CRISPR screens"/>
</dbReference>
<dbReference type="ChiTaRS" id="Csnka2ip">
    <property type="organism name" value="mouse"/>
</dbReference>
<dbReference type="PRO" id="PR:Q8CH19"/>
<dbReference type="Proteomes" id="UP000000589">
    <property type="component" value="Chromosome 16"/>
</dbReference>
<dbReference type="RNAct" id="Q8CH19">
    <property type="molecule type" value="protein"/>
</dbReference>
<dbReference type="Bgee" id="ENSMUSG00000068167">
    <property type="expression patterns" value="Expressed in testis and 4 other cell types or tissues"/>
</dbReference>
<dbReference type="ExpressionAtlas" id="Q8CH19">
    <property type="expression patterns" value="baseline and differential"/>
</dbReference>
<dbReference type="GO" id="GO:0001673">
    <property type="term" value="C:male germ cell nucleus"/>
    <property type="evidence" value="ECO:0000314"/>
    <property type="project" value="MGI"/>
</dbReference>
<dbReference type="InterPro" id="IPR038954">
    <property type="entry name" value="CSNKA2IP"/>
</dbReference>
<dbReference type="PANTHER" id="PTHR35825">
    <property type="entry name" value="CASEIN KINASE II SUBUNIT ALPHA PRIME-INTERACTING PROTEIN"/>
    <property type="match status" value="1"/>
</dbReference>
<dbReference type="PANTHER" id="PTHR35825:SF2">
    <property type="entry name" value="CASEIN KINASE II SUBUNIT ALPHA'-INTERACTING PROTEIN"/>
    <property type="match status" value="1"/>
</dbReference>
<name>CS2IP_MOUSE</name>
<feature type="chain" id="PRO_0000436772" description="Casein kinase II subunit alpha'-interacting protein">
    <location>
        <begin position="1"/>
        <end position="720"/>
    </location>
</feature>
<feature type="region of interest" description="Disordered" evidence="1">
    <location>
        <begin position="227"/>
        <end position="250"/>
    </location>
</feature>
<feature type="region of interest" description="Disordered" evidence="1">
    <location>
        <begin position="264"/>
        <end position="303"/>
    </location>
</feature>
<feature type="region of interest" description="Disordered" evidence="1">
    <location>
        <begin position="333"/>
        <end position="366"/>
    </location>
</feature>
<feature type="region of interest" description="Disordered" evidence="1">
    <location>
        <begin position="602"/>
        <end position="640"/>
    </location>
</feature>
<feature type="region of interest" description="Disordered" evidence="1">
    <location>
        <begin position="678"/>
        <end position="698"/>
    </location>
</feature>
<feature type="compositionally biased region" description="Polar residues" evidence="1">
    <location>
        <begin position="227"/>
        <end position="249"/>
    </location>
</feature>
<feature type="compositionally biased region" description="Low complexity" evidence="1">
    <location>
        <begin position="608"/>
        <end position="626"/>
    </location>
</feature>
<feature type="compositionally biased region" description="Pro residues" evidence="1">
    <location>
        <begin position="630"/>
        <end position="640"/>
    </location>
</feature>
<feature type="compositionally biased region" description="Basic residues" evidence="1">
    <location>
        <begin position="687"/>
        <end position="698"/>
    </location>
</feature>
<evidence type="ECO:0000256" key="1">
    <source>
        <dbReference type="SAM" id="MobiDB-lite"/>
    </source>
</evidence>
<evidence type="ECO:0000269" key="2">
    <source>
    </source>
</evidence>
<evidence type="ECO:0000303" key="3">
    <source>
    </source>
</evidence>
<evidence type="ECO:0000305" key="4"/>
<evidence type="ECO:0000305" key="5">
    <source>
    </source>
</evidence>
<evidence type="ECO:0000312" key="6">
    <source>
        <dbReference type="EMBL" id="AAI37819.1"/>
    </source>
</evidence>
<evidence type="ECO:0000312" key="7">
    <source>
        <dbReference type="EMBL" id="EDK98240.1"/>
    </source>
</evidence>
<evidence type="ECO:0000312" key="8">
    <source>
        <dbReference type="MGI" id="MGI:2676295"/>
    </source>
</evidence>
<evidence type="ECO:0000312" key="9">
    <source>
        <dbReference type="Proteomes" id="UP000000589"/>
    </source>
</evidence>
<reference evidence="9" key="1">
    <citation type="journal article" date="2009" name="PLoS Biol.">
        <title>Lineage-specific biology revealed by a finished genome assembly of the mouse.</title>
        <authorList>
            <person name="Church D.M."/>
            <person name="Goodstadt L."/>
            <person name="Hillier L.W."/>
            <person name="Zody M.C."/>
            <person name="Goldstein S."/>
            <person name="She X."/>
            <person name="Bult C.J."/>
            <person name="Agarwala R."/>
            <person name="Cherry J.L."/>
            <person name="DiCuccio M."/>
            <person name="Hlavina W."/>
            <person name="Kapustin Y."/>
            <person name="Meric P."/>
            <person name="Maglott D."/>
            <person name="Birtle Z."/>
            <person name="Marques A.C."/>
            <person name="Graves T."/>
            <person name="Zhou S."/>
            <person name="Teague B."/>
            <person name="Potamousis K."/>
            <person name="Churas C."/>
            <person name="Place M."/>
            <person name="Herschleb J."/>
            <person name="Runnheim R."/>
            <person name="Forrest D."/>
            <person name="Amos-Landgraf J."/>
            <person name="Schwartz D.C."/>
            <person name="Cheng Z."/>
            <person name="Lindblad-Toh K."/>
            <person name="Eichler E.E."/>
            <person name="Ponting C.P."/>
        </authorList>
    </citation>
    <scope>NUCLEOTIDE SEQUENCE [LARGE SCALE GENOMIC DNA]</scope>
    <source>
        <strain evidence="9">C57BL/6J</strain>
    </source>
</reference>
<reference evidence="7" key="2">
    <citation type="submission" date="2005-07" db="EMBL/GenBank/DDBJ databases">
        <authorList>
            <person name="Mural R.J."/>
            <person name="Adams M.D."/>
            <person name="Myers E.W."/>
            <person name="Smith H.O."/>
            <person name="Venter J.C."/>
        </authorList>
    </citation>
    <scope>NUCLEOTIDE SEQUENCE [LARGE SCALE GENOMIC DNA]</scope>
</reference>
<reference evidence="4" key="3">
    <citation type="journal article" date="2009" name="Nucleic Acids Res.">
        <title>Identification and characterization of a novel testis-specific gene CKT2, which encodes a substrate for protein kinase CK2.</title>
        <authorList>
            <person name="Bai X."/>
            <person name="Silvius D."/>
            <person name="Chan E.D."/>
            <person name="Escalier D."/>
            <person name="Xu S.X."/>
        </authorList>
    </citation>
    <scope>NUCLEOTIDE SEQUENCE [MRNA] OF 290-720</scope>
    <scope>FUNCTION</scope>
    <scope>INTERACTION WITH CSNK2A2</scope>
    <scope>SUBCELLULAR LOCATION</scope>
    <scope>TISSUE SPECIFICITY</scope>
</reference>
<reference evidence="6" key="4">
    <citation type="journal article" date="2004" name="Genome Res.">
        <title>The status, quality, and expansion of the NIH full-length cDNA project: the Mammalian Gene Collection (MGC).</title>
        <authorList>
            <consortium name="The MGC Project Team"/>
        </authorList>
    </citation>
    <scope>NUCLEOTIDE SEQUENCE [LARGE SCALE MRNA] OF 316-720</scope>
</reference>
<organism>
    <name type="scientific">Mus musculus</name>
    <name type="common">Mouse</name>
    <dbReference type="NCBI Taxonomy" id="10090"/>
    <lineage>
        <taxon>Eukaryota</taxon>
        <taxon>Metazoa</taxon>
        <taxon>Chordata</taxon>
        <taxon>Craniata</taxon>
        <taxon>Vertebrata</taxon>
        <taxon>Euteleostomi</taxon>
        <taxon>Mammalia</taxon>
        <taxon>Eutheria</taxon>
        <taxon>Euarchontoglires</taxon>
        <taxon>Glires</taxon>
        <taxon>Rodentia</taxon>
        <taxon>Myomorpha</taxon>
        <taxon>Muroidea</taxon>
        <taxon>Muridae</taxon>
        <taxon>Murinae</taxon>
        <taxon>Mus</taxon>
        <taxon>Mus</taxon>
    </lineage>
</organism>
<sequence length="720" mass="79205">MVPLGYNNKYFGYVQDCQQQATDNSPIHYYTGDKQNQSYSQSMCKEQSQNTVTVSPASFNKKAQSTQGSYNRAMKSSSSLYSTCSTTPSKDSLLKNSSYPSWKSLDSSLSHHKSETTSLTSFTSTSSLEPSKISSRSRLLLPKTQTSSSIDLCWKSPSLESNQRVSTSSSTSVQHHEAPSLNIIWTTPSLESNQSEHDSQLCKSKSQKDSSLDRLWSSLLESSQKALSSPSFTNRLQRNSFPPTSSSLEFSRVARNSPLPDCSKPLKIPVSNSNNNVFSLPLSPAKSRKSTPSPHSFLPSRRLSTCQPKPKIVARCDPSTRAINTAVCHPKVQNTASLSDKQRPRQLPSIHPKPNPSGQRVSSPKPCIKNKIASVPCSRLPNKSSVERSVKTEPENEISWALDYSHPCIIKGGSVPVDVVNKIINSISKSTIQKDLSRQILFRRMRGKPNPRPGPRLSSTYSVCLECASAIKSQCNHLSGKRDPRCATLFVIPTPESSTDGKVDVKIILILSLPEKPSSTCFQLPMKDSKSENNLEALDDNLDVLEKITQFFPASESDFIQGLKTKRKCLAVSSESKDLSQEPQSIDWLLYVKNSNGIQLETQVQGPSSSSSSSCSSVSSSSSASSIGRPSPPTPWVDPTPVPVSGYVLAKVRSYHRLPPGTSWLEFIRGSSSDTIKLRQSPPVKAKPVRSHNSKCLKKGKRETSALLRYFQTKFQNEKS</sequence>
<keyword id="KW-0539">Nucleus</keyword>
<keyword id="KW-0597">Phosphoprotein</keyword>
<keyword id="KW-1185">Reference proteome</keyword>
<proteinExistence type="evidence at protein level"/>